<accession>Q084C2</accession>
<comment type="function">
    <text evidence="1">Catalyzes the ATP-dependent amidation of deamido-NAD to form NAD. Uses ammonia as a nitrogen source.</text>
</comment>
<comment type="catalytic activity">
    <reaction evidence="1">
        <text>deamido-NAD(+) + NH4(+) + ATP = AMP + diphosphate + NAD(+) + H(+)</text>
        <dbReference type="Rhea" id="RHEA:21188"/>
        <dbReference type="ChEBI" id="CHEBI:15378"/>
        <dbReference type="ChEBI" id="CHEBI:28938"/>
        <dbReference type="ChEBI" id="CHEBI:30616"/>
        <dbReference type="ChEBI" id="CHEBI:33019"/>
        <dbReference type="ChEBI" id="CHEBI:57540"/>
        <dbReference type="ChEBI" id="CHEBI:58437"/>
        <dbReference type="ChEBI" id="CHEBI:456215"/>
        <dbReference type="EC" id="6.3.1.5"/>
    </reaction>
</comment>
<comment type="pathway">
    <text evidence="1">Cofactor biosynthesis; NAD(+) biosynthesis; NAD(+) from deamido-NAD(+) (ammonia route): step 1/1.</text>
</comment>
<comment type="subunit">
    <text evidence="1">Homodimer.</text>
</comment>
<comment type="similarity">
    <text evidence="1">Belongs to the NAD synthetase family.</text>
</comment>
<gene>
    <name evidence="1" type="primary">nadE</name>
    <name type="ordered locus">Sfri_1542</name>
</gene>
<proteinExistence type="inferred from homology"/>
<sequence>MKGQILREMHVLKAIEPEFEIQRRIAFIKATLSEAHSKTLVLGISGGVDSSLAGRLCQLAVNSLNQEKASDEYQFIAVRLPYHVQQDEAEAQLACQFIQPSKQVTVNVHDGVVGIHNATLKGLTAAGLSSTDAGKTDFLKGNVKARMRMIVQYDIAGAMGGLVVGTDHSAENITGFYTKWGDGACDLAPLFGLNKRQVRLLAAHLGAPEILVKKAPTADLEDNKPQLEDEVALGLTYDQIDDFLEGKDVAKSVEDKLVSIYKRTQHKRKPIPTIYD</sequence>
<evidence type="ECO:0000255" key="1">
    <source>
        <dbReference type="HAMAP-Rule" id="MF_00193"/>
    </source>
</evidence>
<protein>
    <recommendedName>
        <fullName evidence="1">NH(3)-dependent NAD(+) synthetase</fullName>
        <ecNumber evidence="1">6.3.1.5</ecNumber>
    </recommendedName>
</protein>
<organism>
    <name type="scientific">Shewanella frigidimarina (strain NCIMB 400)</name>
    <dbReference type="NCBI Taxonomy" id="318167"/>
    <lineage>
        <taxon>Bacteria</taxon>
        <taxon>Pseudomonadati</taxon>
        <taxon>Pseudomonadota</taxon>
        <taxon>Gammaproteobacteria</taxon>
        <taxon>Alteromonadales</taxon>
        <taxon>Shewanellaceae</taxon>
        <taxon>Shewanella</taxon>
    </lineage>
</organism>
<keyword id="KW-0067">ATP-binding</keyword>
<keyword id="KW-0436">Ligase</keyword>
<keyword id="KW-0460">Magnesium</keyword>
<keyword id="KW-0479">Metal-binding</keyword>
<keyword id="KW-0520">NAD</keyword>
<keyword id="KW-0547">Nucleotide-binding</keyword>
<keyword id="KW-1185">Reference proteome</keyword>
<name>NADE_SHEFN</name>
<dbReference type="EC" id="6.3.1.5" evidence="1"/>
<dbReference type="EMBL" id="CP000447">
    <property type="protein sequence ID" value="ABI71393.1"/>
    <property type="molecule type" value="Genomic_DNA"/>
</dbReference>
<dbReference type="RefSeq" id="WP_011637013.1">
    <property type="nucleotide sequence ID" value="NC_008345.1"/>
</dbReference>
<dbReference type="SMR" id="Q084C2"/>
<dbReference type="STRING" id="318167.Sfri_1542"/>
<dbReference type="KEGG" id="sfr:Sfri_1542"/>
<dbReference type="eggNOG" id="COG0171">
    <property type="taxonomic scope" value="Bacteria"/>
</dbReference>
<dbReference type="HOGENOM" id="CLU_059327_3_0_6"/>
<dbReference type="OrthoDB" id="3266517at2"/>
<dbReference type="UniPathway" id="UPA00253">
    <property type="reaction ID" value="UER00333"/>
</dbReference>
<dbReference type="Proteomes" id="UP000000684">
    <property type="component" value="Chromosome"/>
</dbReference>
<dbReference type="GO" id="GO:0005737">
    <property type="term" value="C:cytoplasm"/>
    <property type="evidence" value="ECO:0007669"/>
    <property type="project" value="InterPro"/>
</dbReference>
<dbReference type="GO" id="GO:0005524">
    <property type="term" value="F:ATP binding"/>
    <property type="evidence" value="ECO:0007669"/>
    <property type="project" value="UniProtKB-UniRule"/>
</dbReference>
<dbReference type="GO" id="GO:0004359">
    <property type="term" value="F:glutaminase activity"/>
    <property type="evidence" value="ECO:0007669"/>
    <property type="project" value="InterPro"/>
</dbReference>
<dbReference type="GO" id="GO:0046872">
    <property type="term" value="F:metal ion binding"/>
    <property type="evidence" value="ECO:0007669"/>
    <property type="project" value="UniProtKB-KW"/>
</dbReference>
<dbReference type="GO" id="GO:0003952">
    <property type="term" value="F:NAD+ synthase (glutamine-hydrolyzing) activity"/>
    <property type="evidence" value="ECO:0007669"/>
    <property type="project" value="InterPro"/>
</dbReference>
<dbReference type="GO" id="GO:0008795">
    <property type="term" value="F:NAD+ synthase activity"/>
    <property type="evidence" value="ECO:0007669"/>
    <property type="project" value="UniProtKB-UniRule"/>
</dbReference>
<dbReference type="GO" id="GO:0009435">
    <property type="term" value="P:NAD biosynthetic process"/>
    <property type="evidence" value="ECO:0007669"/>
    <property type="project" value="UniProtKB-UniRule"/>
</dbReference>
<dbReference type="CDD" id="cd00553">
    <property type="entry name" value="NAD_synthase"/>
    <property type="match status" value="1"/>
</dbReference>
<dbReference type="FunFam" id="3.40.50.620:FF:000015">
    <property type="entry name" value="NH(3)-dependent NAD(+) synthetase"/>
    <property type="match status" value="1"/>
</dbReference>
<dbReference type="Gene3D" id="3.40.50.620">
    <property type="entry name" value="HUPs"/>
    <property type="match status" value="1"/>
</dbReference>
<dbReference type="HAMAP" id="MF_00193">
    <property type="entry name" value="NadE_ammonia_dep"/>
    <property type="match status" value="1"/>
</dbReference>
<dbReference type="InterPro" id="IPR022310">
    <property type="entry name" value="NAD/GMP_synthase"/>
</dbReference>
<dbReference type="InterPro" id="IPR003694">
    <property type="entry name" value="NAD_synthase"/>
</dbReference>
<dbReference type="InterPro" id="IPR022926">
    <property type="entry name" value="NH(3)-dep_NAD(+)_synth"/>
</dbReference>
<dbReference type="InterPro" id="IPR014729">
    <property type="entry name" value="Rossmann-like_a/b/a_fold"/>
</dbReference>
<dbReference type="NCBIfam" id="TIGR00552">
    <property type="entry name" value="nadE"/>
    <property type="match status" value="1"/>
</dbReference>
<dbReference type="NCBIfam" id="NF001979">
    <property type="entry name" value="PRK00768.1"/>
    <property type="match status" value="1"/>
</dbReference>
<dbReference type="PANTHER" id="PTHR23090">
    <property type="entry name" value="NH 3 /GLUTAMINE-DEPENDENT NAD + SYNTHETASE"/>
    <property type="match status" value="1"/>
</dbReference>
<dbReference type="PANTHER" id="PTHR23090:SF7">
    <property type="entry name" value="NH(3)-DEPENDENT NAD(+) SYNTHETASE"/>
    <property type="match status" value="1"/>
</dbReference>
<dbReference type="Pfam" id="PF02540">
    <property type="entry name" value="NAD_synthase"/>
    <property type="match status" value="1"/>
</dbReference>
<dbReference type="SUPFAM" id="SSF52402">
    <property type="entry name" value="Adenine nucleotide alpha hydrolases-like"/>
    <property type="match status" value="1"/>
</dbReference>
<reference key="1">
    <citation type="submission" date="2006-08" db="EMBL/GenBank/DDBJ databases">
        <title>Complete sequence of Shewanella frigidimarina NCIMB 400.</title>
        <authorList>
            <consortium name="US DOE Joint Genome Institute"/>
            <person name="Copeland A."/>
            <person name="Lucas S."/>
            <person name="Lapidus A."/>
            <person name="Barry K."/>
            <person name="Detter J.C."/>
            <person name="Glavina del Rio T."/>
            <person name="Hammon N."/>
            <person name="Israni S."/>
            <person name="Dalin E."/>
            <person name="Tice H."/>
            <person name="Pitluck S."/>
            <person name="Fredrickson J.K."/>
            <person name="Kolker E."/>
            <person name="McCuel L.A."/>
            <person name="DiChristina T."/>
            <person name="Nealson K.H."/>
            <person name="Newman D."/>
            <person name="Tiedje J.M."/>
            <person name="Zhou J."/>
            <person name="Romine M.F."/>
            <person name="Culley D.E."/>
            <person name="Serres M."/>
            <person name="Chertkov O."/>
            <person name="Brettin T."/>
            <person name="Bruce D."/>
            <person name="Han C."/>
            <person name="Tapia R."/>
            <person name="Gilna P."/>
            <person name="Schmutz J."/>
            <person name="Larimer F."/>
            <person name="Land M."/>
            <person name="Hauser L."/>
            <person name="Kyrpides N."/>
            <person name="Mikhailova N."/>
            <person name="Richardson P."/>
        </authorList>
    </citation>
    <scope>NUCLEOTIDE SEQUENCE [LARGE SCALE GENOMIC DNA]</scope>
    <source>
        <strain>NCIMB 400</strain>
    </source>
</reference>
<feature type="chain" id="PRO_1000077602" description="NH(3)-dependent NAD(+) synthetase">
    <location>
        <begin position="1"/>
        <end position="276"/>
    </location>
</feature>
<feature type="binding site" evidence="1">
    <location>
        <begin position="43"/>
        <end position="50"/>
    </location>
    <ligand>
        <name>ATP</name>
        <dbReference type="ChEBI" id="CHEBI:30616"/>
    </ligand>
</feature>
<feature type="binding site" evidence="1">
    <location>
        <position position="49"/>
    </location>
    <ligand>
        <name>Mg(2+)</name>
        <dbReference type="ChEBI" id="CHEBI:18420"/>
    </ligand>
</feature>
<feature type="binding site" evidence="1">
    <location>
        <position position="146"/>
    </location>
    <ligand>
        <name>deamido-NAD(+)</name>
        <dbReference type="ChEBI" id="CHEBI:58437"/>
    </ligand>
</feature>
<feature type="binding site" evidence="1">
    <location>
        <position position="166"/>
    </location>
    <ligand>
        <name>ATP</name>
        <dbReference type="ChEBI" id="CHEBI:30616"/>
    </ligand>
</feature>
<feature type="binding site" evidence="1">
    <location>
        <position position="171"/>
    </location>
    <ligand>
        <name>Mg(2+)</name>
        <dbReference type="ChEBI" id="CHEBI:18420"/>
    </ligand>
</feature>
<feature type="binding site" evidence="1">
    <location>
        <position position="179"/>
    </location>
    <ligand>
        <name>deamido-NAD(+)</name>
        <dbReference type="ChEBI" id="CHEBI:58437"/>
    </ligand>
</feature>
<feature type="binding site" evidence="1">
    <location>
        <position position="186"/>
    </location>
    <ligand>
        <name>deamido-NAD(+)</name>
        <dbReference type="ChEBI" id="CHEBI:58437"/>
    </ligand>
</feature>
<feature type="binding site" evidence="1">
    <location>
        <position position="195"/>
    </location>
    <ligand>
        <name>ATP</name>
        <dbReference type="ChEBI" id="CHEBI:30616"/>
    </ligand>
</feature>
<feature type="binding site" evidence="1">
    <location>
        <position position="217"/>
    </location>
    <ligand>
        <name>ATP</name>
        <dbReference type="ChEBI" id="CHEBI:30616"/>
    </ligand>
</feature>
<feature type="binding site" evidence="1">
    <location>
        <begin position="266"/>
        <end position="267"/>
    </location>
    <ligand>
        <name>deamido-NAD(+)</name>
        <dbReference type="ChEBI" id="CHEBI:58437"/>
    </ligand>
</feature>